<proteinExistence type="inferred from homology"/>
<dbReference type="EC" id="4.2.3.153" evidence="1"/>
<dbReference type="EMBL" id="CP000867">
    <property type="protein sequence ID" value="ABX00999.1"/>
    <property type="molecule type" value="Genomic_DNA"/>
</dbReference>
<dbReference type="SMR" id="A9A7Q1"/>
<dbReference type="STRING" id="444158.MmarC6_0176"/>
<dbReference type="KEGG" id="mmx:MmarC6_0176"/>
<dbReference type="eggNOG" id="arCOG04482">
    <property type="taxonomic scope" value="Archaea"/>
</dbReference>
<dbReference type="HOGENOM" id="CLU_068659_0_0_2"/>
<dbReference type="OrthoDB" id="81473at2157"/>
<dbReference type="PhylomeDB" id="A9A7Q1"/>
<dbReference type="UniPathway" id="UPA00080"/>
<dbReference type="GO" id="GO:0016830">
    <property type="term" value="F:carbon-carbon lyase activity"/>
    <property type="evidence" value="ECO:0007669"/>
    <property type="project" value="UniProtKB-UniRule"/>
</dbReference>
<dbReference type="GO" id="GO:2001120">
    <property type="term" value="P:methanofuran biosynthetic process"/>
    <property type="evidence" value="ECO:0007669"/>
    <property type="project" value="UniProtKB-UniRule"/>
</dbReference>
<dbReference type="HAMAP" id="MF_00681">
    <property type="entry name" value="MfnB"/>
    <property type="match status" value="1"/>
</dbReference>
<dbReference type="InterPro" id="IPR007565">
    <property type="entry name" value="4HFCP_synth"/>
</dbReference>
<dbReference type="InterPro" id="IPR035081">
    <property type="entry name" value="4HFCP_synth_arc"/>
</dbReference>
<dbReference type="InterPro" id="IPR011060">
    <property type="entry name" value="RibuloseP-bd_barrel"/>
</dbReference>
<dbReference type="NCBIfam" id="NF002573">
    <property type="entry name" value="PRK02227.1-1"/>
    <property type="match status" value="1"/>
</dbReference>
<dbReference type="NCBIfam" id="NF002575">
    <property type="entry name" value="PRK02227.1-3"/>
    <property type="match status" value="1"/>
</dbReference>
<dbReference type="Pfam" id="PF04476">
    <property type="entry name" value="4HFCP_synth"/>
    <property type="match status" value="1"/>
</dbReference>
<dbReference type="PIRSF" id="PIRSF015957">
    <property type="entry name" value="UCP015957"/>
    <property type="match status" value="1"/>
</dbReference>
<dbReference type="SUPFAM" id="SSF51569">
    <property type="entry name" value="Aldolase"/>
    <property type="match status" value="1"/>
</dbReference>
<dbReference type="SUPFAM" id="SSF51366">
    <property type="entry name" value="Ribulose-phoshate binding barrel"/>
    <property type="match status" value="1"/>
</dbReference>
<sequence>MILLVSPKDVAEAYEAIEGGADIIDVKNPPEGSLGANFPWVIKETREATPEGMLVSAAIGDVPYKPGTVTLAALGATVSGADYIKVGLYGTRSYQEALDVMKNVTKAVKAVGENKIVVAAGYADAYRVGGVDPLVIPRVARDAGCDVAMLDTAVKDGKTLFDHMSIELLKEFVEETHKYGMKCALAGSIKIEEIPMLKEINCDIVGVRGAACTKGDRNEGRIQKDLVKEIVKVCKE</sequence>
<protein>
    <recommendedName>
        <fullName evidence="1">(5-formylfuran-3-yl)methyl phosphate synthase</fullName>
        <ecNumber evidence="1">4.2.3.153</ecNumber>
    </recommendedName>
    <alternativeName>
        <fullName evidence="1">4-(hydroxymethyl)-2-furancarboxaldehyde-phosphate synthase</fullName>
        <shortName evidence="1">4-HFC-P synthase</shortName>
    </alternativeName>
</protein>
<organism>
    <name type="scientific">Methanococcus maripaludis (strain C6 / ATCC BAA-1332)</name>
    <dbReference type="NCBI Taxonomy" id="444158"/>
    <lineage>
        <taxon>Archaea</taxon>
        <taxon>Methanobacteriati</taxon>
        <taxon>Methanobacteriota</taxon>
        <taxon>Methanomada group</taxon>
        <taxon>Methanococci</taxon>
        <taxon>Methanococcales</taxon>
        <taxon>Methanococcaceae</taxon>
        <taxon>Methanococcus</taxon>
    </lineage>
</organism>
<comment type="function">
    <text evidence="1">Catalyzes the formation of 4-(hydroxymethyl)-2-furancarboxaldehyde phosphate (4-HFC-P) from two molecules of glyceraldehyde-3-P (GA-3-P).</text>
</comment>
<comment type="catalytic activity">
    <reaction evidence="1">
        <text>2 D-glyceraldehyde 3-phosphate = 4-(hydroxymethyl)-2-furancarboxaldehyde phosphate + phosphate + 2 H2O</text>
        <dbReference type="Rhea" id="RHEA:43536"/>
        <dbReference type="ChEBI" id="CHEBI:15377"/>
        <dbReference type="ChEBI" id="CHEBI:43474"/>
        <dbReference type="ChEBI" id="CHEBI:59776"/>
        <dbReference type="ChEBI" id="CHEBI:83407"/>
        <dbReference type="EC" id="4.2.3.153"/>
    </reaction>
</comment>
<comment type="pathway">
    <text evidence="1">Cofactor biosynthesis; methanofuran biosynthesis.</text>
</comment>
<comment type="similarity">
    <text evidence="1">Belongs to the MfnB family.</text>
</comment>
<reference key="1">
    <citation type="submission" date="2007-10" db="EMBL/GenBank/DDBJ databases">
        <title>Complete sequence of Methanococcus maripaludis C6.</title>
        <authorList>
            <consortium name="US DOE Joint Genome Institute"/>
            <person name="Copeland A."/>
            <person name="Lucas S."/>
            <person name="Lapidus A."/>
            <person name="Barry K."/>
            <person name="Glavina del Rio T."/>
            <person name="Dalin E."/>
            <person name="Tice H."/>
            <person name="Pitluck S."/>
            <person name="Clum A."/>
            <person name="Schmutz J."/>
            <person name="Larimer F."/>
            <person name="Land M."/>
            <person name="Hauser L."/>
            <person name="Kyrpides N."/>
            <person name="Mikhailova N."/>
            <person name="Sieprawska-Lupa M."/>
            <person name="Whitman W.B."/>
            <person name="Richardson P."/>
        </authorList>
    </citation>
    <scope>NUCLEOTIDE SEQUENCE [LARGE SCALE GENOMIC DNA]</scope>
    <source>
        <strain>C6 / ATCC BAA-1332</strain>
    </source>
</reference>
<feature type="chain" id="PRO_1000131715" description="(5-formylfuran-3-yl)methyl phosphate synthase">
    <location>
        <begin position="1"/>
        <end position="236"/>
    </location>
</feature>
<feature type="active site" description="Schiff-base intermediate with substrate" evidence="1">
    <location>
        <position position="27"/>
    </location>
</feature>
<feature type="active site" description="Proton acceptor" evidence="1">
    <location>
        <position position="85"/>
    </location>
</feature>
<evidence type="ECO:0000255" key="1">
    <source>
        <dbReference type="HAMAP-Rule" id="MF_00681"/>
    </source>
</evidence>
<name>MFNB_METM6</name>
<gene>
    <name evidence="1" type="primary">mfnB</name>
    <name type="ordered locus">MmarC6_0176</name>
</gene>
<accession>A9A7Q1</accession>
<keyword id="KW-0456">Lyase</keyword>
<keyword id="KW-0704">Schiff base</keyword>